<sequence>MQIHLLIVDALNLIRRIHAVQGSPCVKACQHALQQLIQHSQPSHAVAVFDEDDRSDSWRHQCLPDYKAGRSPMPDNLQQEMPLIRQAFNELGVACWHSPGNEADDLAATLVVKVAGAGHQVTIVSTDKGYCQLLAPNIQIRDYFQKRWLDMPFVKQEFGVLPRQLPDYWGLAGISSSKIPGVAGVGAKTATLLLQQADTLEVLYQNLESIPEKWRKKLQQHQQMAFTCKQIATLKTDLLLSGNLQQLRLKK</sequence>
<reference key="1">
    <citation type="journal article" date="2006" name="J. Bacteriol.">
        <title>Complete genome sequence of Yersinia pestis strains Antiqua and Nepal516: evidence of gene reduction in an emerging pathogen.</title>
        <authorList>
            <person name="Chain P.S.G."/>
            <person name="Hu P."/>
            <person name="Malfatti S.A."/>
            <person name="Radnedge L."/>
            <person name="Larimer F."/>
            <person name="Vergez L.M."/>
            <person name="Worsham P."/>
            <person name="Chu M.C."/>
            <person name="Andersen G.L."/>
        </authorList>
    </citation>
    <scope>NUCLEOTIDE SEQUENCE [LARGE SCALE GENOMIC DNA]</scope>
    <source>
        <strain>Nepal516</strain>
    </source>
</reference>
<reference key="2">
    <citation type="submission" date="2009-04" db="EMBL/GenBank/DDBJ databases">
        <title>Yersinia pestis Nepal516A whole genome shotgun sequencing project.</title>
        <authorList>
            <person name="Plunkett G. III"/>
            <person name="Anderson B.D."/>
            <person name="Baumler D.J."/>
            <person name="Burland V."/>
            <person name="Cabot E.L."/>
            <person name="Glasner J.D."/>
            <person name="Mau B."/>
            <person name="Neeno-Eckwall E."/>
            <person name="Perna N.T."/>
            <person name="Munk A.C."/>
            <person name="Tapia R."/>
            <person name="Green L.D."/>
            <person name="Rogers Y.C."/>
            <person name="Detter J.C."/>
            <person name="Bruce D.C."/>
            <person name="Brettin T.S."/>
        </authorList>
    </citation>
    <scope>NUCLEOTIDE SEQUENCE [LARGE SCALE GENOMIC DNA]</scope>
    <source>
        <strain>Nepal516</strain>
    </source>
</reference>
<protein>
    <recommendedName>
        <fullName evidence="1">Flap endonuclease Xni</fullName>
        <shortName evidence="1">FEN</shortName>
        <ecNumber evidence="1">3.1.-.-</ecNumber>
    </recommendedName>
</protein>
<name>XNI_YERPN</name>
<proteinExistence type="inferred from homology"/>
<evidence type="ECO:0000255" key="1">
    <source>
        <dbReference type="HAMAP-Rule" id="MF_01192"/>
    </source>
</evidence>
<accession>Q1CFD3</accession>
<accession>C4GWZ6</accession>
<feature type="chain" id="PRO_0000297895" description="Flap endonuclease Xni">
    <location>
        <begin position="1"/>
        <end position="251"/>
    </location>
</feature>
<feature type="domain" description="5'-3' exonuclease" evidence="1">
    <location>
        <begin position="160"/>
        <end position="250"/>
    </location>
</feature>
<feature type="region of interest" description="Interaction with DNA" evidence="1">
    <location>
        <begin position="184"/>
        <end position="189"/>
    </location>
</feature>
<feature type="binding site" evidence="1">
    <location>
        <position position="104"/>
    </location>
    <ligand>
        <name>Mg(2+)</name>
        <dbReference type="ChEBI" id="CHEBI:18420"/>
    </ligand>
</feature>
<feature type="binding site" evidence="1">
    <location>
        <position position="171"/>
    </location>
    <ligand>
        <name>K(+)</name>
        <dbReference type="ChEBI" id="CHEBI:29103"/>
    </ligand>
</feature>
<feature type="binding site" evidence="1">
    <location>
        <position position="172"/>
    </location>
    <ligand>
        <name>K(+)</name>
        <dbReference type="ChEBI" id="CHEBI:29103"/>
    </ligand>
</feature>
<feature type="binding site" evidence="1">
    <location>
        <position position="180"/>
    </location>
    <ligand>
        <name>K(+)</name>
        <dbReference type="ChEBI" id="CHEBI:29103"/>
    </ligand>
</feature>
<feature type="binding site" evidence="1">
    <location>
        <position position="182"/>
    </location>
    <ligand>
        <name>K(+)</name>
        <dbReference type="ChEBI" id="CHEBI:29103"/>
    </ligand>
</feature>
<feature type="binding site" evidence="1">
    <location>
        <position position="185"/>
    </location>
    <ligand>
        <name>K(+)</name>
        <dbReference type="ChEBI" id="CHEBI:29103"/>
    </ligand>
</feature>
<keyword id="KW-0238">DNA-binding</keyword>
<keyword id="KW-0255">Endonuclease</keyword>
<keyword id="KW-0378">Hydrolase</keyword>
<keyword id="KW-0460">Magnesium</keyword>
<keyword id="KW-0479">Metal-binding</keyword>
<keyword id="KW-0540">Nuclease</keyword>
<keyword id="KW-0630">Potassium</keyword>
<organism>
    <name type="scientific">Yersinia pestis bv. Antiqua (strain Nepal516)</name>
    <dbReference type="NCBI Taxonomy" id="377628"/>
    <lineage>
        <taxon>Bacteria</taxon>
        <taxon>Pseudomonadati</taxon>
        <taxon>Pseudomonadota</taxon>
        <taxon>Gammaproteobacteria</taxon>
        <taxon>Enterobacterales</taxon>
        <taxon>Yersiniaceae</taxon>
        <taxon>Yersinia</taxon>
    </lineage>
</organism>
<dbReference type="EC" id="3.1.-.-" evidence="1"/>
<dbReference type="EMBL" id="CP000305">
    <property type="protein sequence ID" value="ABG19297.1"/>
    <property type="molecule type" value="Genomic_DNA"/>
</dbReference>
<dbReference type="EMBL" id="ACNQ01000017">
    <property type="protein sequence ID" value="EEO75446.1"/>
    <property type="molecule type" value="Genomic_DNA"/>
</dbReference>
<dbReference type="RefSeq" id="WP_002215970.1">
    <property type="nucleotide sequence ID" value="NZ_ACNQ01000017.1"/>
</dbReference>
<dbReference type="SMR" id="Q1CFD3"/>
<dbReference type="GeneID" id="57977529"/>
<dbReference type="KEGG" id="ypn:YPN_2970"/>
<dbReference type="HOGENOM" id="CLU_004675_1_2_6"/>
<dbReference type="Proteomes" id="UP000008936">
    <property type="component" value="Chromosome"/>
</dbReference>
<dbReference type="GO" id="GO:0008409">
    <property type="term" value="F:5'-3' exonuclease activity"/>
    <property type="evidence" value="ECO:0007669"/>
    <property type="project" value="InterPro"/>
</dbReference>
<dbReference type="GO" id="GO:0017108">
    <property type="term" value="F:5'-flap endonuclease activity"/>
    <property type="evidence" value="ECO:0007669"/>
    <property type="project" value="UniProtKB-UniRule"/>
</dbReference>
<dbReference type="GO" id="GO:0003677">
    <property type="term" value="F:DNA binding"/>
    <property type="evidence" value="ECO:0007669"/>
    <property type="project" value="UniProtKB-UniRule"/>
</dbReference>
<dbReference type="GO" id="GO:0000287">
    <property type="term" value="F:magnesium ion binding"/>
    <property type="evidence" value="ECO:0007669"/>
    <property type="project" value="UniProtKB-UniRule"/>
</dbReference>
<dbReference type="GO" id="GO:0030955">
    <property type="term" value="F:potassium ion binding"/>
    <property type="evidence" value="ECO:0007669"/>
    <property type="project" value="UniProtKB-UniRule"/>
</dbReference>
<dbReference type="GO" id="GO:0033567">
    <property type="term" value="P:DNA replication, Okazaki fragment processing"/>
    <property type="evidence" value="ECO:0007669"/>
    <property type="project" value="UniProtKB-UniRule"/>
</dbReference>
<dbReference type="CDD" id="cd09898">
    <property type="entry name" value="H3TH_53EXO"/>
    <property type="match status" value="1"/>
</dbReference>
<dbReference type="CDD" id="cd09859">
    <property type="entry name" value="PIN_53EXO"/>
    <property type="match status" value="1"/>
</dbReference>
<dbReference type="FunFam" id="1.10.150.20:FF:000003">
    <property type="entry name" value="DNA polymerase I"/>
    <property type="match status" value="1"/>
</dbReference>
<dbReference type="FunFam" id="3.40.50.1010:FF:000011">
    <property type="entry name" value="Flap endonuclease Xni"/>
    <property type="match status" value="1"/>
</dbReference>
<dbReference type="Gene3D" id="1.10.150.20">
    <property type="entry name" value="5' to 3' exonuclease, C-terminal subdomain"/>
    <property type="match status" value="1"/>
</dbReference>
<dbReference type="Gene3D" id="3.40.50.1010">
    <property type="entry name" value="5'-nuclease"/>
    <property type="match status" value="1"/>
</dbReference>
<dbReference type="HAMAP" id="MF_01192">
    <property type="entry name" value="Xni"/>
    <property type="match status" value="1"/>
</dbReference>
<dbReference type="InterPro" id="IPR020046">
    <property type="entry name" value="5-3_exonucl_a-hlix_arch_N"/>
</dbReference>
<dbReference type="InterPro" id="IPR002421">
    <property type="entry name" value="5-3_exonuclease"/>
</dbReference>
<dbReference type="InterPro" id="IPR036279">
    <property type="entry name" value="5-3_exonuclease_C_sf"/>
</dbReference>
<dbReference type="InterPro" id="IPR020045">
    <property type="entry name" value="DNA_polI_H3TH"/>
</dbReference>
<dbReference type="InterPro" id="IPR038969">
    <property type="entry name" value="FEN"/>
</dbReference>
<dbReference type="InterPro" id="IPR008918">
    <property type="entry name" value="HhH2"/>
</dbReference>
<dbReference type="InterPro" id="IPR029060">
    <property type="entry name" value="PIN-like_dom_sf"/>
</dbReference>
<dbReference type="InterPro" id="IPR022895">
    <property type="entry name" value="Xni"/>
</dbReference>
<dbReference type="NCBIfam" id="NF007017">
    <property type="entry name" value="PRK09482.1"/>
    <property type="match status" value="1"/>
</dbReference>
<dbReference type="PANTHER" id="PTHR42646:SF2">
    <property type="entry name" value="5'-3' EXONUCLEASE FAMILY PROTEIN"/>
    <property type="match status" value="1"/>
</dbReference>
<dbReference type="PANTHER" id="PTHR42646">
    <property type="entry name" value="FLAP ENDONUCLEASE XNI"/>
    <property type="match status" value="1"/>
</dbReference>
<dbReference type="Pfam" id="PF01367">
    <property type="entry name" value="5_3_exonuc"/>
    <property type="match status" value="1"/>
</dbReference>
<dbReference type="Pfam" id="PF02739">
    <property type="entry name" value="5_3_exonuc_N"/>
    <property type="match status" value="1"/>
</dbReference>
<dbReference type="SMART" id="SM00475">
    <property type="entry name" value="53EXOc"/>
    <property type="match status" value="1"/>
</dbReference>
<dbReference type="SMART" id="SM00279">
    <property type="entry name" value="HhH2"/>
    <property type="match status" value="1"/>
</dbReference>
<dbReference type="SUPFAM" id="SSF47807">
    <property type="entry name" value="5' to 3' exonuclease, C-terminal subdomain"/>
    <property type="match status" value="1"/>
</dbReference>
<dbReference type="SUPFAM" id="SSF88723">
    <property type="entry name" value="PIN domain-like"/>
    <property type="match status" value="1"/>
</dbReference>
<comment type="function">
    <text evidence="1">Has flap endonuclease activity. During DNA replication, flap endonucleases cleave the 5'-overhanging flap structure that is generated by displacement synthesis when DNA polymerase encounters the 5'-end of a downstream Okazaki fragment.</text>
</comment>
<comment type="cofactor">
    <cofactor evidence="1">
        <name>Mg(2+)</name>
        <dbReference type="ChEBI" id="CHEBI:18420"/>
    </cofactor>
    <text evidence="1">Binds 2 Mg(2+) per subunit. Only one magnesium ion has a direct interaction with the protein, the other interactions are indirect.</text>
</comment>
<comment type="cofactor">
    <cofactor evidence="1">
        <name>K(+)</name>
        <dbReference type="ChEBI" id="CHEBI:29103"/>
    </cofactor>
    <text evidence="1">Binds 1 K(+) per subunit. The potassium ion strongly increases the affinity for DNA.</text>
</comment>
<comment type="similarity">
    <text evidence="1">Belongs to the Xni family.</text>
</comment>
<gene>
    <name evidence="1" type="primary">xni</name>
    <name evidence="1" type="synonym">ygdG</name>
    <name type="ordered locus">YPN_2970</name>
    <name type="ORF">YP516_3363</name>
</gene>